<sequence length="114" mass="13060">MNKLIDEITKGQLNPDVPSFRPGDTVRVHAKVVEGTRERIQLFEGVVIKRRGAGISETFTVRKISNSVGVERTFPVHTPRIAKLEVIRRGKVRRAKLYYLRNLRGKAARIKEIR</sequence>
<dbReference type="EMBL" id="AM263198">
    <property type="protein sequence ID" value="CAK21227.1"/>
    <property type="molecule type" value="Genomic_DNA"/>
</dbReference>
<dbReference type="RefSeq" id="WP_011702583.1">
    <property type="nucleotide sequence ID" value="NC_008555.1"/>
</dbReference>
<dbReference type="SMR" id="A0AJP5"/>
<dbReference type="STRING" id="386043.lwe1809"/>
<dbReference type="GeneID" id="61189710"/>
<dbReference type="KEGG" id="lwe:lwe1809"/>
<dbReference type="eggNOG" id="COG0335">
    <property type="taxonomic scope" value="Bacteria"/>
</dbReference>
<dbReference type="HOGENOM" id="CLU_103507_2_1_9"/>
<dbReference type="OrthoDB" id="9803541at2"/>
<dbReference type="Proteomes" id="UP000000779">
    <property type="component" value="Chromosome"/>
</dbReference>
<dbReference type="GO" id="GO:0022625">
    <property type="term" value="C:cytosolic large ribosomal subunit"/>
    <property type="evidence" value="ECO:0007669"/>
    <property type="project" value="TreeGrafter"/>
</dbReference>
<dbReference type="GO" id="GO:0003735">
    <property type="term" value="F:structural constituent of ribosome"/>
    <property type="evidence" value="ECO:0007669"/>
    <property type="project" value="InterPro"/>
</dbReference>
<dbReference type="GO" id="GO:0006412">
    <property type="term" value="P:translation"/>
    <property type="evidence" value="ECO:0007669"/>
    <property type="project" value="UniProtKB-UniRule"/>
</dbReference>
<dbReference type="FunFam" id="2.30.30.790:FF:000001">
    <property type="entry name" value="50S ribosomal protein L19"/>
    <property type="match status" value="1"/>
</dbReference>
<dbReference type="Gene3D" id="2.30.30.790">
    <property type="match status" value="1"/>
</dbReference>
<dbReference type="HAMAP" id="MF_00402">
    <property type="entry name" value="Ribosomal_bL19"/>
    <property type="match status" value="1"/>
</dbReference>
<dbReference type="InterPro" id="IPR001857">
    <property type="entry name" value="Ribosomal_bL19"/>
</dbReference>
<dbReference type="InterPro" id="IPR018257">
    <property type="entry name" value="Ribosomal_bL19_CS"/>
</dbReference>
<dbReference type="InterPro" id="IPR038657">
    <property type="entry name" value="Ribosomal_bL19_sf"/>
</dbReference>
<dbReference type="InterPro" id="IPR008991">
    <property type="entry name" value="Translation_prot_SH3-like_sf"/>
</dbReference>
<dbReference type="NCBIfam" id="TIGR01024">
    <property type="entry name" value="rplS_bact"/>
    <property type="match status" value="1"/>
</dbReference>
<dbReference type="PANTHER" id="PTHR15680:SF9">
    <property type="entry name" value="LARGE RIBOSOMAL SUBUNIT PROTEIN BL19M"/>
    <property type="match status" value="1"/>
</dbReference>
<dbReference type="PANTHER" id="PTHR15680">
    <property type="entry name" value="RIBOSOMAL PROTEIN L19"/>
    <property type="match status" value="1"/>
</dbReference>
<dbReference type="Pfam" id="PF01245">
    <property type="entry name" value="Ribosomal_L19"/>
    <property type="match status" value="1"/>
</dbReference>
<dbReference type="PIRSF" id="PIRSF002191">
    <property type="entry name" value="Ribosomal_L19"/>
    <property type="match status" value="1"/>
</dbReference>
<dbReference type="PRINTS" id="PR00061">
    <property type="entry name" value="RIBOSOMALL19"/>
</dbReference>
<dbReference type="SUPFAM" id="SSF50104">
    <property type="entry name" value="Translation proteins SH3-like domain"/>
    <property type="match status" value="1"/>
</dbReference>
<dbReference type="PROSITE" id="PS01015">
    <property type="entry name" value="RIBOSOMAL_L19"/>
    <property type="match status" value="1"/>
</dbReference>
<accession>A0AJP5</accession>
<keyword id="KW-0687">Ribonucleoprotein</keyword>
<keyword id="KW-0689">Ribosomal protein</keyword>
<gene>
    <name evidence="1" type="primary">rplS</name>
    <name type="ordered locus">lwe1809</name>
</gene>
<organism>
    <name type="scientific">Listeria welshimeri serovar 6b (strain ATCC 35897 / DSM 20650 / CCUG 15529 / CIP 8149 / NCTC 11857 / SLCC 5334 / V8)</name>
    <dbReference type="NCBI Taxonomy" id="386043"/>
    <lineage>
        <taxon>Bacteria</taxon>
        <taxon>Bacillati</taxon>
        <taxon>Bacillota</taxon>
        <taxon>Bacilli</taxon>
        <taxon>Bacillales</taxon>
        <taxon>Listeriaceae</taxon>
        <taxon>Listeria</taxon>
    </lineage>
</organism>
<feature type="chain" id="PRO_1000049694" description="Large ribosomal subunit protein bL19">
    <location>
        <begin position="1"/>
        <end position="114"/>
    </location>
</feature>
<proteinExistence type="inferred from homology"/>
<protein>
    <recommendedName>
        <fullName evidence="1">Large ribosomal subunit protein bL19</fullName>
    </recommendedName>
    <alternativeName>
        <fullName evidence="2">50S ribosomal protein L19</fullName>
    </alternativeName>
</protein>
<evidence type="ECO:0000255" key="1">
    <source>
        <dbReference type="HAMAP-Rule" id="MF_00402"/>
    </source>
</evidence>
<evidence type="ECO:0000305" key="2"/>
<comment type="function">
    <text evidence="1">This protein is located at the 30S-50S ribosomal subunit interface and may play a role in the structure and function of the aminoacyl-tRNA binding site.</text>
</comment>
<comment type="similarity">
    <text evidence="1">Belongs to the bacterial ribosomal protein bL19 family.</text>
</comment>
<name>RL19_LISW6</name>
<reference key="1">
    <citation type="journal article" date="2006" name="J. Bacteriol.">
        <title>Whole-genome sequence of Listeria welshimeri reveals common steps in genome reduction with Listeria innocua as compared to Listeria monocytogenes.</title>
        <authorList>
            <person name="Hain T."/>
            <person name="Steinweg C."/>
            <person name="Kuenne C.T."/>
            <person name="Billion A."/>
            <person name="Ghai R."/>
            <person name="Chatterjee S.S."/>
            <person name="Domann E."/>
            <person name="Kaerst U."/>
            <person name="Goesmann A."/>
            <person name="Bekel T."/>
            <person name="Bartels D."/>
            <person name="Kaiser O."/>
            <person name="Meyer F."/>
            <person name="Puehler A."/>
            <person name="Weisshaar B."/>
            <person name="Wehland J."/>
            <person name="Liang C."/>
            <person name="Dandekar T."/>
            <person name="Lampidis R."/>
            <person name="Kreft J."/>
            <person name="Goebel W."/>
            <person name="Chakraborty T."/>
        </authorList>
    </citation>
    <scope>NUCLEOTIDE SEQUENCE [LARGE SCALE GENOMIC DNA]</scope>
    <source>
        <strain>ATCC 35897 / DSM 20650 / CCUG 15529 / CIP 8149 / NCTC 11857 / SLCC 5334 / V8</strain>
    </source>
</reference>